<feature type="chain" id="PRO_0000309330" description="Triacylglycerol hydrolase DDHD2">
    <location>
        <begin position="1"/>
        <end position="711"/>
    </location>
</feature>
<feature type="domain" description="WWE" evidence="2">
    <location>
        <begin position="30"/>
        <end position="112"/>
    </location>
</feature>
<feature type="domain" description="SAM">
    <location>
        <begin position="385"/>
        <end position="448"/>
    </location>
</feature>
<feature type="domain" description="DDHD" evidence="3">
    <location>
        <begin position="495"/>
        <end position="700"/>
    </location>
</feature>
<feature type="region of interest" description="Disordered" evidence="4">
    <location>
        <begin position="1"/>
        <end position="24"/>
    </location>
</feature>
<feature type="region of interest" description="Disordered" evidence="4">
    <location>
        <begin position="449"/>
        <end position="470"/>
    </location>
</feature>
<feature type="region of interest" description="Disordered" evidence="4">
    <location>
        <begin position="609"/>
        <end position="638"/>
    </location>
</feature>
<feature type="compositionally biased region" description="Acidic residues" evidence="4">
    <location>
        <begin position="614"/>
        <end position="624"/>
    </location>
</feature>
<feature type="active site" description="Nucleophile" evidence="20">
    <location>
        <position position="351"/>
    </location>
</feature>
<feature type="modified residue" description="Phosphoserine" evidence="1">
    <location>
        <position position="447"/>
    </location>
</feature>
<feature type="splice variant" id="VSP_056087" description="In isoform 2." evidence="14">
    <location>
        <begin position="1"/>
        <end position="381"/>
    </location>
</feature>
<feature type="sequence variant" id="VAR_036930" description="In dbSNP:rs2306899." evidence="13">
    <original>T</original>
    <variation>M</variation>
    <location>
        <position position="186"/>
    </location>
</feature>
<feature type="sequence variant" id="VAR_089906" description="In SPG54; likely pathogenic; loss of triacylglycerol hydrolase activity." evidence="8 9 10 11">
    <location>
        <begin position="287"/>
        <end position="711"/>
    </location>
</feature>
<feature type="sequence variant" id="VAR_089907" description="In SPG54; likely pathogenic; loss of triacylglycerol hydrolase activity." evidence="8 11">
    <location>
        <begin position="516"/>
        <end position="711"/>
    </location>
</feature>
<feature type="sequence variant" id="VAR_069574" description="In SPG54; likely pathogenic; loss of triacylglycerol hydrolase activity; dbSNP:rs375168720." evidence="8 11">
    <original>D</original>
    <variation>H</variation>
    <location>
        <position position="660"/>
    </location>
</feature>
<feature type="mutagenesis site" description="Loss of triacylglycerol hydrolase activity." evidence="11">
    <original>W</original>
    <variation>R</variation>
    <location>
        <position position="103"/>
    </location>
</feature>
<feature type="mutagenesis site" description="Loss of triacylglycerol hydrolase activity." evidence="11">
    <original>V</original>
    <variation>F</variation>
    <location>
        <position position="220"/>
    </location>
</feature>
<feature type="mutagenesis site" description="Abolishes phospholipase activity. Loss of efficient targeting to the Golgi apparatus. No effect on PI(3)P-, PI(4)P-, PI(5)P-binding. Loss of triacylglycerol hydrolase activity." evidence="5 6 7 11">
    <original>S</original>
    <variation>A</variation>
    <location>
        <position position="351"/>
    </location>
</feature>
<feature type="mutagenesis site" description="Loss of phospholipid binding and of Golgi/ERGIC localization; when associated with A-435 and A-436." evidence="7">
    <original>R</original>
    <variation>A</variation>
    <location>
        <position position="434"/>
    </location>
</feature>
<feature type="mutagenesis site" description="Loss of phospholipid binding and of Golgi/ERGIC localization; when associated with A-434 and A-436." evidence="7">
    <original>K</original>
    <variation>A</variation>
    <location>
        <position position="435"/>
    </location>
</feature>
<feature type="mutagenesis site" description="Loss of phospholipid binding and of Golgi/ERGIC localization; when associated with A-434 and A-435." evidence="7">
    <original>K</original>
    <variation>A</variation>
    <location>
        <position position="436"/>
    </location>
</feature>
<feature type="sequence conflict" description="In Ref. 2; BAB14470." evidence="17" ref="2">
    <original>S</original>
    <variation>G</variation>
    <location>
        <position position="292"/>
    </location>
</feature>
<feature type="sequence conflict" description="In Ref. 5; BAA34445." evidence="17" ref="5">
    <original>D</original>
    <variation>G</variation>
    <location>
        <position position="376"/>
    </location>
</feature>
<accession>O94830</accession>
<accession>B3KWV2</accession>
<accession>B3KXB5</accession>
<accession>Q9H8X7</accession>
<comment type="function">
    <text evidence="1 5 6 7 11 12">Diacylglycerol (DAG) and triacylglycerol (TAG) lipase required for proper lipid homeostasis in the central nervous system (PubMed:29278326, PubMed:37832604). It cooperates with PNPLA2/ATGL in neuronal TAG catabolism and hydrolyzes sn-1,3 DAG downstream of PNPLA2/ATGL (By similarity). In vitro, it also acts as a phospholipase that hydrolyzes preferentially phosphatidic acids, including 1,2-dioleoyl-sn-phosphatidic acid, phosphatidylcholine and phosphatidylethanolamine. Specifically binds to phosphatidylinositol 3-phosphate (PI(3)P), phosphatidylinositol 4-phosphate (PI(4)P), phosphatidylinositol 5-phosphate (PI(5)P) and possibly phosphatidylinositol 4,5-bisphosphate (PI(4,5)P2). May be involved in the maintenance of the endoplasmic reticulum and/or Golgi structures. May regulate the transport between Golgi apparatus and plasma membrane.</text>
</comment>
<comment type="catalytic activity">
    <reaction evidence="11 12">
        <text>a triacylglycerol + H2O = a diacylglycerol + a fatty acid + H(+)</text>
        <dbReference type="Rhea" id="RHEA:12044"/>
        <dbReference type="ChEBI" id="CHEBI:15377"/>
        <dbReference type="ChEBI" id="CHEBI:15378"/>
        <dbReference type="ChEBI" id="CHEBI:17855"/>
        <dbReference type="ChEBI" id="CHEBI:18035"/>
        <dbReference type="ChEBI" id="CHEBI:28868"/>
        <dbReference type="EC" id="3.1.1.3"/>
    </reaction>
    <physiologicalReaction direction="left-to-right" evidence="12">
        <dbReference type="Rhea" id="RHEA:12045"/>
    </physiologicalReaction>
</comment>
<comment type="catalytic activity">
    <reaction evidence="1">
        <text>a diacylglycerol + H2O = a monoacylglycerol + a fatty acid + H(+)</text>
        <dbReference type="Rhea" id="RHEA:32731"/>
        <dbReference type="ChEBI" id="CHEBI:15377"/>
        <dbReference type="ChEBI" id="CHEBI:15378"/>
        <dbReference type="ChEBI" id="CHEBI:17408"/>
        <dbReference type="ChEBI" id="CHEBI:18035"/>
        <dbReference type="ChEBI" id="CHEBI:28868"/>
    </reaction>
    <physiologicalReaction direction="left-to-right" evidence="1">
        <dbReference type="Rhea" id="RHEA:32732"/>
    </physiologicalReaction>
</comment>
<comment type="catalytic activity">
    <reaction evidence="1">
        <text>a 1,3-diacylglycerol + H2O = a 1-acylglycerol + a fatty acid + H(+)</text>
        <dbReference type="Rhea" id="RHEA:78019"/>
        <dbReference type="ChEBI" id="CHEBI:15377"/>
        <dbReference type="ChEBI" id="CHEBI:15378"/>
        <dbReference type="ChEBI" id="CHEBI:28868"/>
        <dbReference type="ChEBI" id="CHEBI:35759"/>
        <dbReference type="ChEBI" id="CHEBI:47777"/>
    </reaction>
    <physiologicalReaction direction="left-to-right" evidence="1">
        <dbReference type="Rhea" id="RHEA:78020"/>
    </physiologicalReaction>
</comment>
<comment type="catalytic activity">
    <reaction evidence="1">
        <text>a 1-acylglycerol + H2O = glycerol + a fatty acid + H(+)</text>
        <dbReference type="Rhea" id="RHEA:34019"/>
        <dbReference type="ChEBI" id="CHEBI:15377"/>
        <dbReference type="ChEBI" id="CHEBI:15378"/>
        <dbReference type="ChEBI" id="CHEBI:17754"/>
        <dbReference type="ChEBI" id="CHEBI:28868"/>
        <dbReference type="ChEBI" id="CHEBI:35759"/>
    </reaction>
    <physiologicalReaction direction="left-to-right" evidence="1">
        <dbReference type="Rhea" id="RHEA:34020"/>
    </physiologicalReaction>
</comment>
<comment type="catalytic activity">
    <reaction evidence="12">
        <text>1,2,3-tri-(9Z-octadecenoyl)-glycerol + H2O = di-(9Z)-octadecenoylglycerol + (9Z)-octadecenoate + H(+)</text>
        <dbReference type="Rhea" id="RHEA:38575"/>
        <dbReference type="ChEBI" id="CHEBI:15377"/>
        <dbReference type="ChEBI" id="CHEBI:15378"/>
        <dbReference type="ChEBI" id="CHEBI:30823"/>
        <dbReference type="ChEBI" id="CHEBI:53753"/>
        <dbReference type="ChEBI" id="CHEBI:75945"/>
    </reaction>
    <physiologicalReaction direction="left-to-right" evidence="12">
        <dbReference type="Rhea" id="RHEA:38576"/>
    </physiologicalReaction>
</comment>
<comment type="catalytic activity">
    <reaction evidence="1">
        <text>di-(9Z)-octadecenoylglycerol + H2O = (9Z-octadecenoyl)-glycerol + (9Z)-octadecenoate + H(+)</text>
        <dbReference type="Rhea" id="RHEA:47868"/>
        <dbReference type="ChEBI" id="CHEBI:15377"/>
        <dbReference type="ChEBI" id="CHEBI:15378"/>
        <dbReference type="ChEBI" id="CHEBI:30823"/>
        <dbReference type="ChEBI" id="CHEBI:75937"/>
        <dbReference type="ChEBI" id="CHEBI:75945"/>
    </reaction>
    <physiologicalReaction direction="left-to-right" evidence="1">
        <dbReference type="Rhea" id="RHEA:47869"/>
    </physiologicalReaction>
</comment>
<comment type="catalytic activity">
    <reaction evidence="1">
        <text>1,3-di-(9Z-octadecenoyl)-glycerol + H2O = 1-(9Z-octadecenoyl)-glycerol + (9Z)-octadecenoate + H(+)</text>
        <dbReference type="Rhea" id="RHEA:39939"/>
        <dbReference type="ChEBI" id="CHEBI:15377"/>
        <dbReference type="ChEBI" id="CHEBI:15378"/>
        <dbReference type="ChEBI" id="CHEBI:30823"/>
        <dbReference type="ChEBI" id="CHEBI:75342"/>
        <dbReference type="ChEBI" id="CHEBI:75735"/>
    </reaction>
</comment>
<comment type="catalytic activity">
    <reaction evidence="1">
        <text>trihexadecanoylglycerol + H2O = dihexadecanoylglycerol + hexadecanoate + H(+)</text>
        <dbReference type="Rhea" id="RHEA:59024"/>
        <dbReference type="ChEBI" id="CHEBI:7896"/>
        <dbReference type="ChEBI" id="CHEBI:15377"/>
        <dbReference type="ChEBI" id="CHEBI:15378"/>
        <dbReference type="ChEBI" id="CHEBI:77393"/>
        <dbReference type="ChEBI" id="CHEBI:142940"/>
    </reaction>
    <physiologicalReaction direction="left-to-right" evidence="1">
        <dbReference type="Rhea" id="RHEA:59025"/>
    </physiologicalReaction>
</comment>
<comment type="catalytic activity">
    <reaction evidence="1">
        <text>1,2-di-(9Z-octadecenoyl)-sn-glycero-3-phosphocholine + H2O = (9Z-octadecenoyl)-sn-glycero-3-phosphocholine + (9Z)-octadecenoate + H(+)</text>
        <dbReference type="Rhea" id="RHEA:38699"/>
        <dbReference type="ChEBI" id="CHEBI:15377"/>
        <dbReference type="ChEBI" id="CHEBI:15378"/>
        <dbReference type="ChEBI" id="CHEBI:30823"/>
        <dbReference type="ChEBI" id="CHEBI:74669"/>
        <dbReference type="ChEBI" id="CHEBI:76083"/>
    </reaction>
    <physiologicalReaction direction="left-to-right" evidence="1">
        <dbReference type="Rhea" id="RHEA:38700"/>
    </physiologicalReaction>
</comment>
<comment type="catalytic activity">
    <reaction evidence="1">
        <text>1-(9Z-octadecenoyl)-glycerol + H2O = glycerol + (9Z)-octadecenoate + H(+)</text>
        <dbReference type="Rhea" id="RHEA:38487"/>
        <dbReference type="ChEBI" id="CHEBI:15377"/>
        <dbReference type="ChEBI" id="CHEBI:15378"/>
        <dbReference type="ChEBI" id="CHEBI:17754"/>
        <dbReference type="ChEBI" id="CHEBI:30823"/>
        <dbReference type="ChEBI" id="CHEBI:75342"/>
    </reaction>
    <physiologicalReaction direction="left-to-right" evidence="1">
        <dbReference type="Rhea" id="RHEA:38488"/>
    </physiologicalReaction>
</comment>
<comment type="catalytic activity">
    <reaction evidence="7">
        <text>1,2-di-(9Z-octadecenoyl)-sn-glycero-3-phosphate + H2O = 2-(9Z-octadecenoyl)-sn-glycero-3-phosphate + (9Z)-octadecenoate + H(+)</text>
        <dbReference type="Rhea" id="RHEA:45128"/>
        <dbReference type="ChEBI" id="CHEBI:15377"/>
        <dbReference type="ChEBI" id="CHEBI:15378"/>
        <dbReference type="ChEBI" id="CHEBI:30823"/>
        <dbReference type="ChEBI" id="CHEBI:74546"/>
        <dbReference type="ChEBI" id="CHEBI:77593"/>
    </reaction>
    <physiologicalReaction direction="left-to-right" evidence="19">
        <dbReference type="Rhea" id="RHEA:45129"/>
    </physiologicalReaction>
</comment>
<comment type="catalytic activity">
    <reaction evidence="5">
        <text>1-hexadecanoyl-2-(9Z-octadecenoyl)-sn-glycero-3-phosphate + H2O = 2-(9Z-octadecenoyl)-sn-glycero-3-phosphate + hexadecanoate + H(+)</text>
        <dbReference type="Rhea" id="RHEA:40943"/>
        <dbReference type="ChEBI" id="CHEBI:7896"/>
        <dbReference type="ChEBI" id="CHEBI:15377"/>
        <dbReference type="ChEBI" id="CHEBI:15378"/>
        <dbReference type="ChEBI" id="CHEBI:64839"/>
        <dbReference type="ChEBI" id="CHEBI:77593"/>
    </reaction>
    <physiologicalReaction direction="left-to-right" evidence="18">
        <dbReference type="Rhea" id="RHEA:40944"/>
    </physiologicalReaction>
</comment>
<comment type="catalytic activity">
    <reaction evidence="5">
        <text>1-hexadecanoyl-2-(9Z-octadecenoyl)-sn-glycero-3-phosphoethanolamine + H2O = 2-(9Z-octadecenoyl)-sn-glycero-3-phosphoethanolamine + hexadecanoate + H(+)</text>
        <dbReference type="Rhea" id="RHEA:45132"/>
        <dbReference type="ChEBI" id="CHEBI:7896"/>
        <dbReference type="ChEBI" id="CHEBI:15377"/>
        <dbReference type="ChEBI" id="CHEBI:15378"/>
        <dbReference type="ChEBI" id="CHEBI:73007"/>
        <dbReference type="ChEBI" id="CHEBI:76088"/>
    </reaction>
    <physiologicalReaction direction="left-to-right" evidence="18">
        <dbReference type="Rhea" id="RHEA:45133"/>
    </physiologicalReaction>
</comment>
<comment type="catalytic activity">
    <reaction evidence="5">
        <text>1-hexadecanoyl-2-(9Z-octadecenoyl)-sn-glycero-3-phospho-L-serine + H2O = 2-(9Z-octadecenoyl)-sn-glycero-3-phospho-L-serine + hexadecanoate + H(+)</text>
        <dbReference type="Rhea" id="RHEA:43968"/>
        <dbReference type="ChEBI" id="CHEBI:7896"/>
        <dbReference type="ChEBI" id="CHEBI:15377"/>
        <dbReference type="ChEBI" id="CHEBI:15378"/>
        <dbReference type="ChEBI" id="CHEBI:75029"/>
        <dbReference type="ChEBI" id="CHEBI:77342"/>
    </reaction>
    <physiologicalReaction direction="left-to-right" evidence="18">
        <dbReference type="Rhea" id="RHEA:43969"/>
    </physiologicalReaction>
</comment>
<comment type="catalytic activity">
    <reaction evidence="5">
        <text>1-hexadecanoyl-2-(9Z-octadecenoyl)-sn-glycero-3-phosphocholine + H2O = 2-(9Z-octadecenoyl)-sn-glycero-3-phosphocholine + hexadecanoate + H(+)</text>
        <dbReference type="Rhea" id="RHEA:38783"/>
        <dbReference type="ChEBI" id="CHEBI:7896"/>
        <dbReference type="ChEBI" id="CHEBI:15377"/>
        <dbReference type="ChEBI" id="CHEBI:15378"/>
        <dbReference type="ChEBI" id="CHEBI:73001"/>
        <dbReference type="ChEBI" id="CHEBI:76071"/>
    </reaction>
    <physiologicalReaction direction="left-to-right" evidence="18">
        <dbReference type="Rhea" id="RHEA:38784"/>
    </physiologicalReaction>
</comment>
<comment type="subunit">
    <text>Forms homooligomers and, to a much smaller extent, heterooligomers with DDHD1.</text>
</comment>
<comment type="subcellular location">
    <subcellularLocation>
        <location>Cytoplasm</location>
        <location>Cytosol</location>
    </subcellularLocation>
    <subcellularLocation>
        <location>Endoplasmic reticulum-Golgi intermediate compartment</location>
    </subcellularLocation>
    <subcellularLocation>
        <location>Golgi apparatus</location>
        <location>cis-Golgi network</location>
    </subcellularLocation>
    <text>Cycles between the Golgi apparatus and the cytosol. DDHD2 recruitment to the Golgi/endoplasmic reticulum-Golgi intermediate compartment (ERGIC) is regulated by the levels of phosphoinositides, including PI(4)P.</text>
</comment>
<comment type="alternative products">
    <event type="alternative splicing"/>
    <isoform>
        <id>O94830-1</id>
        <name>1</name>
        <sequence type="displayed"/>
    </isoform>
    <isoform>
        <id>O94830-2</id>
        <name>2</name>
        <sequence type="described" ref="VSP_056087"/>
    </isoform>
</comment>
<comment type="tissue specificity">
    <text evidence="5">Widely expressed (at protein level).</text>
</comment>
<comment type="domain">
    <text>SAM and DDHD domains together are required for phospholipid binding.</text>
</comment>
<comment type="disease" evidence="8 9 10 11">
    <disease id="DI-03677">
        <name>Spastic paraplegia 54, autosomal recessive</name>
        <acronym>SPG54</acronym>
        <description>A form of spastic paraplegia, a neurodegenerative disorder characterized by a slow, gradual, progressive weakness and spasticity of the lower limbs. Rate of progression and the severity of symptoms are quite variable. Initial symptoms may include difficulty with balance, weakness and stiffness in the legs, muscle spasms, and dragging the toes when walking. Complicated forms are recognized by additional variable features including spastic quadriparesis, seizures, dementia, amyotrophy, extrapyramidal disturbance, cerebral or cerebellar atrophy, optic atrophy, and peripheral neuropathy, as well as by extra neurological manifestations. SPG54 patients have delayed psychomotor development, intellectual disability, and early-onset spasticity of the lower limbs. Brain MRI shows a thin corpus callosum and periventricular white matter lesions, and an abnormal lipid peak due to accumulation of neutral lipids in certain brain regions.</description>
        <dbReference type="MIM" id="615033"/>
    </disease>
    <text>The disease is caused by variants affecting the gene represented in this entry.</text>
</comment>
<comment type="similarity">
    <text evidence="17">Belongs to the PA-PLA1 family.</text>
</comment>
<comment type="caution">
    <text evidence="17">It is uncertain whether Met-1 or Met-31 is the initiator.</text>
</comment>
<comment type="sequence caution" evidence="17">
    <conflict type="erroneous initiation">
        <sequence resource="EMBL-CDS" id="AAH10504"/>
    </conflict>
    <text>Truncated N-terminus.</text>
</comment>
<comment type="sequence caution" evidence="17">
    <conflict type="erroneous initiation">
        <sequence resource="EMBL-CDS" id="BAB14470"/>
    </conflict>
    <text>Truncated N-terminus.</text>
</comment>
<dbReference type="EC" id="3.1.1.3" evidence="11 12"/>
<dbReference type="EC" id="3.1.1.-"/>
<dbReference type="EMBL" id="AK023218">
    <property type="protein sequence ID" value="BAB14470.1"/>
    <property type="status" value="ALT_INIT"/>
    <property type="molecule type" value="mRNA"/>
</dbReference>
<dbReference type="EMBL" id="AK125904">
    <property type="protein sequence ID" value="BAG54264.1"/>
    <property type="molecule type" value="mRNA"/>
</dbReference>
<dbReference type="EMBL" id="AK127040">
    <property type="protein sequence ID" value="BAG54427.1"/>
    <property type="molecule type" value="mRNA"/>
</dbReference>
<dbReference type="EMBL" id="AC084024">
    <property type="status" value="NOT_ANNOTATED_CDS"/>
    <property type="molecule type" value="Genomic_DNA"/>
</dbReference>
<dbReference type="EMBL" id="AC087362">
    <property type="status" value="NOT_ANNOTATED_CDS"/>
    <property type="molecule type" value="Genomic_DNA"/>
</dbReference>
<dbReference type="EMBL" id="AB018268">
    <property type="protein sequence ID" value="BAA34445.1"/>
    <property type="molecule type" value="mRNA"/>
</dbReference>
<dbReference type="EMBL" id="CH471080">
    <property type="protein sequence ID" value="EAW63324.1"/>
    <property type="molecule type" value="Genomic_DNA"/>
</dbReference>
<dbReference type="EMBL" id="BC010504">
    <property type="protein sequence ID" value="AAH10504.1"/>
    <property type="status" value="ALT_INIT"/>
    <property type="molecule type" value="mRNA"/>
</dbReference>
<dbReference type="CCDS" id="CCDS34883.1">
    <molecule id="O94830-1"/>
</dbReference>
<dbReference type="RefSeq" id="NP_001157704.1">
    <molecule id="O94830-1"/>
    <property type="nucleotide sequence ID" value="NM_001164232.2"/>
</dbReference>
<dbReference type="RefSeq" id="NP_001349840.1">
    <molecule id="O94830-1"/>
    <property type="nucleotide sequence ID" value="NM_001362911.2"/>
</dbReference>
<dbReference type="RefSeq" id="NP_001349841.1">
    <molecule id="O94830-1"/>
    <property type="nucleotide sequence ID" value="NM_001362912.2"/>
</dbReference>
<dbReference type="RefSeq" id="NP_001349843.1">
    <molecule id="O94830-1"/>
    <property type="nucleotide sequence ID" value="NM_001362914.2"/>
</dbReference>
<dbReference type="RefSeq" id="NP_056029.2">
    <molecule id="O94830-1"/>
    <property type="nucleotide sequence ID" value="NM_015214.3"/>
</dbReference>
<dbReference type="RefSeq" id="XP_005273511.1">
    <property type="nucleotide sequence ID" value="XM_005273454.2"/>
</dbReference>
<dbReference type="RefSeq" id="XP_005273512.1">
    <property type="nucleotide sequence ID" value="XM_005273455.3"/>
</dbReference>
<dbReference type="RefSeq" id="XP_011542758.1">
    <molecule id="O94830-1"/>
    <property type="nucleotide sequence ID" value="XM_011544456.3"/>
</dbReference>
<dbReference type="RefSeq" id="XP_016868741.1">
    <property type="nucleotide sequence ID" value="XM_017013252.1"/>
</dbReference>
<dbReference type="RefSeq" id="XP_016868742.1">
    <property type="nucleotide sequence ID" value="XM_017013253.1"/>
</dbReference>
<dbReference type="RefSeq" id="XP_016868743.1">
    <property type="nucleotide sequence ID" value="XM_017013254.1"/>
</dbReference>
<dbReference type="RefSeq" id="XP_016868744.1">
    <property type="nucleotide sequence ID" value="XM_017013255.1"/>
</dbReference>
<dbReference type="RefSeq" id="XP_016868745.1">
    <property type="nucleotide sequence ID" value="XM_017013256.1"/>
</dbReference>
<dbReference type="RefSeq" id="XP_047277570.1">
    <molecule id="O94830-1"/>
    <property type="nucleotide sequence ID" value="XM_047421614.1"/>
</dbReference>
<dbReference type="RefSeq" id="XP_054216159.1">
    <molecule id="O94830-1"/>
    <property type="nucleotide sequence ID" value="XM_054360184.1"/>
</dbReference>
<dbReference type="RefSeq" id="XP_054216160.1">
    <molecule id="O94830-1"/>
    <property type="nucleotide sequence ID" value="XM_054360185.1"/>
</dbReference>
<dbReference type="SMR" id="O94830"/>
<dbReference type="BioGRID" id="116862">
    <property type="interactions" value="43"/>
</dbReference>
<dbReference type="FunCoup" id="O94830">
    <property type="interactions" value="1279"/>
</dbReference>
<dbReference type="IntAct" id="O94830">
    <property type="interactions" value="31"/>
</dbReference>
<dbReference type="MINT" id="O94830"/>
<dbReference type="STRING" id="9606.ENSP00000380352"/>
<dbReference type="SwissLipids" id="SLP:000001070"/>
<dbReference type="GlyGen" id="O94830">
    <property type="glycosylation" value="1 site"/>
</dbReference>
<dbReference type="iPTMnet" id="O94830"/>
<dbReference type="PhosphoSitePlus" id="O94830"/>
<dbReference type="BioMuta" id="DDHD2"/>
<dbReference type="jPOST" id="O94830"/>
<dbReference type="MassIVE" id="O94830"/>
<dbReference type="PaxDb" id="9606-ENSP00000380352"/>
<dbReference type="PeptideAtlas" id="O94830"/>
<dbReference type="ProteomicsDB" id="3807"/>
<dbReference type="ProteomicsDB" id="50475">
    <molecule id="O94830-1"/>
</dbReference>
<dbReference type="Pumba" id="O94830"/>
<dbReference type="Antibodypedia" id="4449">
    <property type="antibodies" value="72 antibodies from 18 providers"/>
</dbReference>
<dbReference type="DNASU" id="23259"/>
<dbReference type="Ensembl" id="ENST00000397166.7">
    <molecule id="O94830-1"/>
    <property type="protein sequence ID" value="ENSP00000380352.2"/>
    <property type="gene ID" value="ENSG00000085788.14"/>
</dbReference>
<dbReference type="Ensembl" id="ENST00000517385.5">
    <molecule id="O94830-2"/>
    <property type="protein sequence ID" value="ENSP00000429017.1"/>
    <property type="gene ID" value="ENSG00000085788.14"/>
</dbReference>
<dbReference type="Ensembl" id="ENST00000520272.6">
    <molecule id="O94830-1"/>
    <property type="protein sequence ID" value="ENSP00000429932.2"/>
    <property type="gene ID" value="ENSG00000085788.14"/>
</dbReference>
<dbReference type="GeneID" id="23259"/>
<dbReference type="KEGG" id="hsa:23259"/>
<dbReference type="MANE-Select" id="ENST00000397166.7">
    <property type="protein sequence ID" value="ENSP00000380352.2"/>
    <property type="RefSeq nucleotide sequence ID" value="NM_015214.3"/>
    <property type="RefSeq protein sequence ID" value="NP_056029.2"/>
</dbReference>
<dbReference type="UCSC" id="uc003xlb.4">
    <molecule id="O94830-1"/>
    <property type="organism name" value="human"/>
</dbReference>
<dbReference type="AGR" id="HGNC:29106"/>
<dbReference type="CTD" id="23259"/>
<dbReference type="DisGeNET" id="23259"/>
<dbReference type="GeneCards" id="DDHD2"/>
<dbReference type="HGNC" id="HGNC:29106">
    <property type="gene designation" value="DDHD2"/>
</dbReference>
<dbReference type="HPA" id="ENSG00000085788">
    <property type="expression patterns" value="Low tissue specificity"/>
</dbReference>
<dbReference type="MalaCards" id="DDHD2"/>
<dbReference type="MIM" id="615003">
    <property type="type" value="gene"/>
</dbReference>
<dbReference type="MIM" id="615033">
    <property type="type" value="phenotype"/>
</dbReference>
<dbReference type="neXtProt" id="NX_O94830"/>
<dbReference type="OpenTargets" id="ENSG00000085788"/>
<dbReference type="Orphanet" id="320380">
    <property type="disease" value="Autosomal recessive spastic paraplegia type 54"/>
</dbReference>
<dbReference type="PharmGKB" id="PA128394618"/>
<dbReference type="VEuPathDB" id="HostDB:ENSG00000085788"/>
<dbReference type="eggNOG" id="KOG2308">
    <property type="taxonomic scope" value="Eukaryota"/>
</dbReference>
<dbReference type="GeneTree" id="ENSGT00940000156808"/>
<dbReference type="HOGENOM" id="CLU_006932_0_0_1"/>
<dbReference type="InParanoid" id="O94830"/>
<dbReference type="OMA" id="MPTCAET"/>
<dbReference type="OrthoDB" id="69269at2759"/>
<dbReference type="PAN-GO" id="O94830">
    <property type="GO annotations" value="4 GO annotations based on evolutionary models"/>
</dbReference>
<dbReference type="PhylomeDB" id="O94830"/>
<dbReference type="TreeFam" id="TF314133"/>
<dbReference type="PathwayCommons" id="O94830"/>
<dbReference type="Reactome" id="R-HSA-1483166">
    <property type="pathway name" value="Synthesis of PA"/>
</dbReference>
<dbReference type="SignaLink" id="O94830"/>
<dbReference type="SIGNOR" id="O94830"/>
<dbReference type="BioGRID-ORCS" id="23259">
    <property type="hits" value="13 hits in 1152 CRISPR screens"/>
</dbReference>
<dbReference type="ChiTaRS" id="DDHD2">
    <property type="organism name" value="human"/>
</dbReference>
<dbReference type="GenomeRNAi" id="23259"/>
<dbReference type="Pharos" id="O94830">
    <property type="development level" value="Tbio"/>
</dbReference>
<dbReference type="PRO" id="PR:O94830"/>
<dbReference type="Proteomes" id="UP000005640">
    <property type="component" value="Chromosome 8"/>
</dbReference>
<dbReference type="RNAct" id="O94830">
    <property type="molecule type" value="protein"/>
</dbReference>
<dbReference type="Bgee" id="ENSG00000085788">
    <property type="expression patterns" value="Expressed in endothelial cell and 202 other cell types or tissues"/>
</dbReference>
<dbReference type="ExpressionAtlas" id="O94830">
    <property type="expression patterns" value="baseline and differential"/>
</dbReference>
<dbReference type="GO" id="GO:0034451">
    <property type="term" value="C:centriolar satellite"/>
    <property type="evidence" value="ECO:0000314"/>
    <property type="project" value="HPA"/>
</dbReference>
<dbReference type="GO" id="GO:0030134">
    <property type="term" value="C:COPII-coated ER to Golgi transport vesicle"/>
    <property type="evidence" value="ECO:0000318"/>
    <property type="project" value="GO_Central"/>
</dbReference>
<dbReference type="GO" id="GO:0005737">
    <property type="term" value="C:cytoplasm"/>
    <property type="evidence" value="ECO:0000318"/>
    <property type="project" value="GO_Central"/>
</dbReference>
<dbReference type="GO" id="GO:0005829">
    <property type="term" value="C:cytosol"/>
    <property type="evidence" value="ECO:0000314"/>
    <property type="project" value="HPA"/>
</dbReference>
<dbReference type="GO" id="GO:0005793">
    <property type="term" value="C:endoplasmic reticulum-Golgi intermediate compartment"/>
    <property type="evidence" value="ECO:0007669"/>
    <property type="project" value="UniProtKB-SubCell"/>
</dbReference>
<dbReference type="GO" id="GO:0005794">
    <property type="term" value="C:Golgi apparatus"/>
    <property type="evidence" value="ECO:0007669"/>
    <property type="project" value="UniProtKB-SubCell"/>
</dbReference>
<dbReference type="GO" id="GO:0016020">
    <property type="term" value="C:membrane"/>
    <property type="evidence" value="ECO:0007669"/>
    <property type="project" value="Ensembl"/>
</dbReference>
<dbReference type="GO" id="GO:0120516">
    <property type="term" value="F:diacylglycerol lipase activity"/>
    <property type="evidence" value="ECO:0007669"/>
    <property type="project" value="RHEA"/>
</dbReference>
<dbReference type="GO" id="GO:0046872">
    <property type="term" value="F:metal ion binding"/>
    <property type="evidence" value="ECO:0007669"/>
    <property type="project" value="InterPro"/>
</dbReference>
<dbReference type="GO" id="GO:0004620">
    <property type="term" value="F:phospholipase activity"/>
    <property type="evidence" value="ECO:0000318"/>
    <property type="project" value="GO_Central"/>
</dbReference>
<dbReference type="GO" id="GO:0004806">
    <property type="term" value="F:triacylglycerol lipase activity"/>
    <property type="evidence" value="ECO:0000318"/>
    <property type="project" value="GO_Central"/>
</dbReference>
<dbReference type="GO" id="GO:0034389">
    <property type="term" value="P:lipid droplet organization"/>
    <property type="evidence" value="ECO:0007669"/>
    <property type="project" value="Ensembl"/>
</dbReference>
<dbReference type="GO" id="GO:0007626">
    <property type="term" value="P:locomotory behavior"/>
    <property type="evidence" value="ECO:0007669"/>
    <property type="project" value="Ensembl"/>
</dbReference>
<dbReference type="GO" id="GO:0000266">
    <property type="term" value="P:mitochondrial fission"/>
    <property type="evidence" value="ECO:0007669"/>
    <property type="project" value="Ensembl"/>
</dbReference>
<dbReference type="GO" id="GO:0090141">
    <property type="term" value="P:positive regulation of mitochondrial fission"/>
    <property type="evidence" value="ECO:0007669"/>
    <property type="project" value="Ensembl"/>
</dbReference>
<dbReference type="GO" id="GO:0019433">
    <property type="term" value="P:triglyceride catabolic process"/>
    <property type="evidence" value="ECO:0007669"/>
    <property type="project" value="Ensembl"/>
</dbReference>
<dbReference type="GO" id="GO:0008542">
    <property type="term" value="P:visual learning"/>
    <property type="evidence" value="ECO:0007669"/>
    <property type="project" value="Ensembl"/>
</dbReference>
<dbReference type="CDD" id="cd09585">
    <property type="entry name" value="SAM_DDHD2"/>
    <property type="match status" value="1"/>
</dbReference>
<dbReference type="FunFam" id="1.10.150.50:FF:000034">
    <property type="entry name" value="ankyrin repeat and SAM domain-containing protein 4B"/>
    <property type="match status" value="1"/>
</dbReference>
<dbReference type="Gene3D" id="1.10.150.50">
    <property type="entry name" value="Transcription Factor, Ets-1"/>
    <property type="match status" value="1"/>
</dbReference>
<dbReference type="InterPro" id="IPR004177">
    <property type="entry name" value="DDHD_dom"/>
</dbReference>
<dbReference type="InterPro" id="IPR001660">
    <property type="entry name" value="SAM"/>
</dbReference>
<dbReference type="InterPro" id="IPR013761">
    <property type="entry name" value="SAM/pointed_sf"/>
</dbReference>
<dbReference type="InterPro" id="IPR004170">
    <property type="entry name" value="WWE_dom"/>
</dbReference>
<dbReference type="PANTHER" id="PTHR23509">
    <property type="entry name" value="PA-PL1 PHOSPHOLIPASE FAMILY"/>
    <property type="match status" value="1"/>
</dbReference>
<dbReference type="PANTHER" id="PTHR23509:SF7">
    <property type="entry name" value="PHOSPHOLIPASE DDHD2"/>
    <property type="match status" value="1"/>
</dbReference>
<dbReference type="Pfam" id="PF02862">
    <property type="entry name" value="DDHD"/>
    <property type="match status" value="1"/>
</dbReference>
<dbReference type="Pfam" id="PF00536">
    <property type="entry name" value="SAM_1"/>
    <property type="match status" value="1"/>
</dbReference>
<dbReference type="Pfam" id="PF02825">
    <property type="entry name" value="WWE"/>
    <property type="match status" value="1"/>
</dbReference>
<dbReference type="Pfam" id="PF23464">
    <property type="entry name" value="WWE_3"/>
    <property type="match status" value="1"/>
</dbReference>
<dbReference type="SMART" id="SM01127">
    <property type="entry name" value="DDHD"/>
    <property type="match status" value="1"/>
</dbReference>
<dbReference type="SMART" id="SM00454">
    <property type="entry name" value="SAM"/>
    <property type="match status" value="1"/>
</dbReference>
<dbReference type="SUPFAM" id="SSF47769">
    <property type="entry name" value="SAM/Pointed domain"/>
    <property type="match status" value="1"/>
</dbReference>
<dbReference type="PROSITE" id="PS51043">
    <property type="entry name" value="DDHD"/>
    <property type="match status" value="1"/>
</dbReference>
<dbReference type="PROSITE" id="PS50918">
    <property type="entry name" value="WWE"/>
    <property type="match status" value="1"/>
</dbReference>
<organism>
    <name type="scientific">Homo sapiens</name>
    <name type="common">Human</name>
    <dbReference type="NCBI Taxonomy" id="9606"/>
    <lineage>
        <taxon>Eukaryota</taxon>
        <taxon>Metazoa</taxon>
        <taxon>Chordata</taxon>
        <taxon>Craniata</taxon>
        <taxon>Vertebrata</taxon>
        <taxon>Euteleostomi</taxon>
        <taxon>Mammalia</taxon>
        <taxon>Eutheria</taxon>
        <taxon>Euarchontoglires</taxon>
        <taxon>Primates</taxon>
        <taxon>Haplorrhini</taxon>
        <taxon>Catarrhini</taxon>
        <taxon>Hominidae</taxon>
        <taxon>Homo</taxon>
    </lineage>
</organism>
<proteinExistence type="evidence at protein level"/>
<name>DDHD2_HUMAN</name>
<reference key="1">
    <citation type="journal article" date="2002" name="J. Biol. Chem.">
        <title>A novel phospholipase A1 with sequence homology to a mammalian Sec23p-interacting protein, p125.</title>
        <authorList>
            <person name="Nakajima K."/>
            <person name="Sonoda H."/>
            <person name="Mizoguchi T."/>
            <person name="Aoki J."/>
            <person name="Arai H."/>
            <person name="Nagahama M."/>
            <person name="Tagaya M."/>
            <person name="Tani K."/>
        </authorList>
    </citation>
    <scope>NUCLEOTIDE SEQUENCE [MRNA] (ISOFORM 1)</scope>
    <scope>FUNCTION</scope>
    <scope>TISSUE SPECIFICITY</scope>
    <scope>SUBCELLULAR LOCATION</scope>
    <scope>MUTAGENESIS OF SER-351</scope>
    <scope>CATALYTIC ACTIVITY</scope>
</reference>
<reference key="2">
    <citation type="journal article" date="2004" name="Nat. Genet.">
        <title>Complete sequencing and characterization of 21,243 full-length human cDNAs.</title>
        <authorList>
            <person name="Ota T."/>
            <person name="Suzuki Y."/>
            <person name="Nishikawa T."/>
            <person name="Otsuki T."/>
            <person name="Sugiyama T."/>
            <person name="Irie R."/>
            <person name="Wakamatsu A."/>
            <person name="Hayashi K."/>
            <person name="Sato H."/>
            <person name="Nagai K."/>
            <person name="Kimura K."/>
            <person name="Makita H."/>
            <person name="Sekine M."/>
            <person name="Obayashi M."/>
            <person name="Nishi T."/>
            <person name="Shibahara T."/>
            <person name="Tanaka T."/>
            <person name="Ishii S."/>
            <person name="Yamamoto J."/>
            <person name="Saito K."/>
            <person name="Kawai Y."/>
            <person name="Isono Y."/>
            <person name="Nakamura Y."/>
            <person name="Nagahari K."/>
            <person name="Murakami K."/>
            <person name="Yasuda T."/>
            <person name="Iwayanagi T."/>
            <person name="Wagatsuma M."/>
            <person name="Shiratori A."/>
            <person name="Sudo H."/>
            <person name="Hosoiri T."/>
            <person name="Kaku Y."/>
            <person name="Kodaira H."/>
            <person name="Kondo H."/>
            <person name="Sugawara M."/>
            <person name="Takahashi M."/>
            <person name="Kanda K."/>
            <person name="Yokoi T."/>
            <person name="Furuya T."/>
            <person name="Kikkawa E."/>
            <person name="Omura Y."/>
            <person name="Abe K."/>
            <person name="Kamihara K."/>
            <person name="Katsuta N."/>
            <person name="Sato K."/>
            <person name="Tanikawa M."/>
            <person name="Yamazaki M."/>
            <person name="Ninomiya K."/>
            <person name="Ishibashi T."/>
            <person name="Yamashita H."/>
            <person name="Murakawa K."/>
            <person name="Fujimori K."/>
            <person name="Tanai H."/>
            <person name="Kimata M."/>
            <person name="Watanabe M."/>
            <person name="Hiraoka S."/>
            <person name="Chiba Y."/>
            <person name="Ishida S."/>
            <person name="Ono Y."/>
            <person name="Takiguchi S."/>
            <person name="Watanabe S."/>
            <person name="Yosida M."/>
            <person name="Hotuta T."/>
            <person name="Kusano J."/>
            <person name="Kanehori K."/>
            <person name="Takahashi-Fujii A."/>
            <person name="Hara H."/>
            <person name="Tanase T.-O."/>
            <person name="Nomura Y."/>
            <person name="Togiya S."/>
            <person name="Komai F."/>
            <person name="Hara R."/>
            <person name="Takeuchi K."/>
            <person name="Arita M."/>
            <person name="Imose N."/>
            <person name="Musashino K."/>
            <person name="Yuuki H."/>
            <person name="Oshima A."/>
            <person name="Sasaki N."/>
            <person name="Aotsuka S."/>
            <person name="Yoshikawa Y."/>
            <person name="Matsunawa H."/>
            <person name="Ichihara T."/>
            <person name="Shiohata N."/>
            <person name="Sano S."/>
            <person name="Moriya S."/>
            <person name="Momiyama H."/>
            <person name="Satoh N."/>
            <person name="Takami S."/>
            <person name="Terashima Y."/>
            <person name="Suzuki O."/>
            <person name="Nakagawa S."/>
            <person name="Senoh A."/>
            <person name="Mizoguchi H."/>
            <person name="Goto Y."/>
            <person name="Shimizu F."/>
            <person name="Wakebe H."/>
            <person name="Hishigaki H."/>
            <person name="Watanabe T."/>
            <person name="Sugiyama A."/>
            <person name="Takemoto M."/>
            <person name="Kawakami B."/>
            <person name="Yamazaki M."/>
            <person name="Watanabe K."/>
            <person name="Kumagai A."/>
            <person name="Itakura S."/>
            <person name="Fukuzumi Y."/>
            <person name="Fujimori Y."/>
            <person name="Komiyama M."/>
            <person name="Tashiro H."/>
            <person name="Tanigami A."/>
            <person name="Fujiwara T."/>
            <person name="Ono T."/>
            <person name="Yamada K."/>
            <person name="Fujii Y."/>
            <person name="Ozaki K."/>
            <person name="Hirao M."/>
            <person name="Ohmori Y."/>
            <person name="Kawabata A."/>
            <person name="Hikiji T."/>
            <person name="Kobatake N."/>
            <person name="Inagaki H."/>
            <person name="Ikema Y."/>
            <person name="Okamoto S."/>
            <person name="Okitani R."/>
            <person name="Kawakami T."/>
            <person name="Noguchi S."/>
            <person name="Itoh T."/>
            <person name="Shigeta K."/>
            <person name="Senba T."/>
            <person name="Matsumura K."/>
            <person name="Nakajima Y."/>
            <person name="Mizuno T."/>
            <person name="Morinaga M."/>
            <person name="Sasaki M."/>
            <person name="Togashi T."/>
            <person name="Oyama M."/>
            <person name="Hata H."/>
            <person name="Watanabe M."/>
            <person name="Komatsu T."/>
            <person name="Mizushima-Sugano J."/>
            <person name="Satoh T."/>
            <person name="Shirai Y."/>
            <person name="Takahashi Y."/>
            <person name="Nakagawa K."/>
            <person name="Okumura K."/>
            <person name="Nagase T."/>
            <person name="Nomura N."/>
            <person name="Kikuchi H."/>
            <person name="Masuho Y."/>
            <person name="Yamashita R."/>
            <person name="Nakai K."/>
            <person name="Yada T."/>
            <person name="Nakamura Y."/>
            <person name="Ohara O."/>
            <person name="Isogai T."/>
            <person name="Sugano S."/>
        </authorList>
    </citation>
    <scope>NUCLEOTIDE SEQUENCE [LARGE SCALE MRNA] (ISOFORMS 1 AND 2)</scope>
    <source>
        <tissue>Brain</tissue>
        <tissue>Testis</tissue>
    </source>
</reference>
<reference key="3">
    <citation type="journal article" date="2006" name="Nature">
        <title>DNA sequence and analysis of human chromosome 8.</title>
        <authorList>
            <person name="Nusbaum C."/>
            <person name="Mikkelsen T.S."/>
            <person name="Zody M.C."/>
            <person name="Asakawa S."/>
            <person name="Taudien S."/>
            <person name="Garber M."/>
            <person name="Kodira C.D."/>
            <person name="Schueler M.G."/>
            <person name="Shimizu A."/>
            <person name="Whittaker C.A."/>
            <person name="Chang J.L."/>
            <person name="Cuomo C.A."/>
            <person name="Dewar K."/>
            <person name="FitzGerald M.G."/>
            <person name="Yang X."/>
            <person name="Allen N.R."/>
            <person name="Anderson S."/>
            <person name="Asakawa T."/>
            <person name="Blechschmidt K."/>
            <person name="Bloom T."/>
            <person name="Borowsky M.L."/>
            <person name="Butler J."/>
            <person name="Cook A."/>
            <person name="Corum B."/>
            <person name="DeArellano K."/>
            <person name="DeCaprio D."/>
            <person name="Dooley K.T."/>
            <person name="Dorris L. III"/>
            <person name="Engels R."/>
            <person name="Gloeckner G."/>
            <person name="Hafez N."/>
            <person name="Hagopian D.S."/>
            <person name="Hall J.L."/>
            <person name="Ishikawa S.K."/>
            <person name="Jaffe D.B."/>
            <person name="Kamat A."/>
            <person name="Kudoh J."/>
            <person name="Lehmann R."/>
            <person name="Lokitsang T."/>
            <person name="Macdonald P."/>
            <person name="Major J.E."/>
            <person name="Matthews C.D."/>
            <person name="Mauceli E."/>
            <person name="Menzel U."/>
            <person name="Mihalev A.H."/>
            <person name="Minoshima S."/>
            <person name="Murayama Y."/>
            <person name="Naylor J.W."/>
            <person name="Nicol R."/>
            <person name="Nguyen C."/>
            <person name="O'Leary S.B."/>
            <person name="O'Neill K."/>
            <person name="Parker S.C.J."/>
            <person name="Polley A."/>
            <person name="Raymond C.K."/>
            <person name="Reichwald K."/>
            <person name="Rodriguez J."/>
            <person name="Sasaki T."/>
            <person name="Schilhabel M."/>
            <person name="Siddiqui R."/>
            <person name="Smith C.L."/>
            <person name="Sneddon T.P."/>
            <person name="Talamas J.A."/>
            <person name="Tenzin P."/>
            <person name="Topham K."/>
            <person name="Venkataraman V."/>
            <person name="Wen G."/>
            <person name="Yamazaki S."/>
            <person name="Young S.K."/>
            <person name="Zeng Q."/>
            <person name="Zimmer A.R."/>
            <person name="Rosenthal A."/>
            <person name="Birren B.W."/>
            <person name="Platzer M."/>
            <person name="Shimizu N."/>
            <person name="Lander E.S."/>
        </authorList>
    </citation>
    <scope>NUCLEOTIDE SEQUENCE [LARGE SCALE GENOMIC DNA]</scope>
</reference>
<reference key="4">
    <citation type="submission" date="2005-09" db="EMBL/GenBank/DDBJ databases">
        <authorList>
            <person name="Mural R.J."/>
            <person name="Istrail S."/>
            <person name="Sutton G.G."/>
            <person name="Florea L."/>
            <person name="Halpern A.L."/>
            <person name="Mobarry C.M."/>
            <person name="Lippert R."/>
            <person name="Walenz B."/>
            <person name="Shatkay H."/>
            <person name="Dew I."/>
            <person name="Miller J.R."/>
            <person name="Flanigan M.J."/>
            <person name="Edwards N.J."/>
            <person name="Bolanos R."/>
            <person name="Fasulo D."/>
            <person name="Halldorsson B.V."/>
            <person name="Hannenhalli S."/>
            <person name="Turner R."/>
            <person name="Yooseph S."/>
            <person name="Lu F."/>
            <person name="Nusskern D.R."/>
            <person name="Shue B.C."/>
            <person name="Zheng X.H."/>
            <person name="Zhong F."/>
            <person name="Delcher A.L."/>
            <person name="Huson D.H."/>
            <person name="Kravitz S.A."/>
            <person name="Mouchard L."/>
            <person name="Reinert K."/>
            <person name="Remington K.A."/>
            <person name="Clark A.G."/>
            <person name="Waterman M.S."/>
            <person name="Eichler E.E."/>
            <person name="Adams M.D."/>
            <person name="Hunkapiller M.W."/>
            <person name="Myers E.W."/>
            <person name="Venter J.C."/>
        </authorList>
    </citation>
    <scope>NUCLEOTIDE SEQUENCE [LARGE SCALE GENOMIC DNA]</scope>
</reference>
<reference key="5">
    <citation type="journal article" date="1998" name="DNA Res.">
        <title>Prediction of the coding sequences of unidentified human genes. XI. The complete sequences of 100 new cDNA clones from brain which code for large proteins in vitro.</title>
        <authorList>
            <person name="Nagase T."/>
            <person name="Ishikawa K."/>
            <person name="Suyama M."/>
            <person name="Kikuno R."/>
            <person name="Miyajima N."/>
            <person name="Tanaka A."/>
            <person name="Kotani H."/>
            <person name="Nomura N."/>
            <person name="Ohara O."/>
        </authorList>
    </citation>
    <scope>NUCLEOTIDE SEQUENCE [LARGE SCALE MRNA] OF 139-711 (ISOFORM 1)</scope>
    <scope>VARIANT MET-186</scope>
    <source>
        <tissue>Brain</tissue>
    </source>
</reference>
<reference key="6">
    <citation type="journal article" date="2004" name="Genome Res.">
        <title>The status, quality, and expansion of the NIH full-length cDNA project: the Mammalian Gene Collection (MGC).</title>
        <authorList>
            <consortium name="The MGC Project Team"/>
        </authorList>
    </citation>
    <scope>NUCLEOTIDE SEQUENCE [LARGE SCALE MRNA] OF 220-711 (ISOFORM 1)</scope>
    <source>
        <tissue>Placenta</tissue>
    </source>
</reference>
<reference key="7">
    <citation type="journal article" date="2005" name="J. Biol. Chem.">
        <title>p125 is localized in endoplasmic reticulum exit sites and involved in their organization.</title>
        <authorList>
            <person name="Shimoi W."/>
            <person name="Ezawa I."/>
            <person name="Nakamoto K."/>
            <person name="Uesaki S."/>
            <person name="Gabreski G."/>
            <person name="Aridor M."/>
            <person name="Yamamoto A."/>
            <person name="Nagahama M."/>
            <person name="Tagaya M."/>
            <person name="Tani K."/>
        </authorList>
    </citation>
    <scope>SUBCELLULAR LOCATION</scope>
</reference>
<reference key="8">
    <citation type="journal article" date="2010" name="FEBS Lett.">
        <title>Golgi-localized KIAA0725p regulates membrane trafficking from the Golgi apparatus to the plasma membrane in mammalian cells.</title>
        <authorList>
            <person name="Sato S."/>
            <person name="Inoue H."/>
            <person name="Kogure T."/>
            <person name="Tagaya M."/>
            <person name="Tani K."/>
        </authorList>
    </citation>
    <scope>FUNCTION</scope>
    <scope>SUBCELLULAR LOCATION</scope>
    <scope>MUTAGENESIS OF SER-351</scope>
</reference>
<reference key="9">
    <citation type="journal article" date="2012" name="Biochim. Biophys. Acta">
        <title>Roles of SAM and DDHD domains in mammalian intracellular phospholipase A1 KIAA0725p.</title>
        <authorList>
            <person name="Inoue H."/>
            <person name="Baba T."/>
            <person name="Sato S."/>
            <person name="Ohtsuki R."/>
            <person name="Takemori A."/>
            <person name="Watanabe T."/>
            <person name="Tagaya M."/>
            <person name="Tani K."/>
        </authorList>
    </citation>
    <scope>FUNCTION</scope>
    <scope>PHOSPHOLIPID-BINDING</scope>
    <scope>INTERACTION WITH DDHD1</scope>
    <scope>HOMOOLIGOMER FORMATION</scope>
    <scope>MUTAGENESIS OF SER-351; ARG-434; LYS-435 AND LYS-436</scope>
    <scope>CATALYTIC ACTIVITY</scope>
</reference>
<reference key="10">
    <citation type="journal article" date="2018" name="Biochemistry">
        <title>Functional contribution of the spastic paraplegia-related triglyceride hydrolase DDHD2 to the formation and content of lipid droplets.</title>
        <authorList>
            <person name="Inloes J.M."/>
            <person name="Kiosses W.B."/>
            <person name="Wang H."/>
            <person name="Walther T.C."/>
            <person name="Farese R.V. Jr."/>
            <person name="Cravatt B.F."/>
        </authorList>
    </citation>
    <scope>FUNCTION</scope>
    <scope>CATALYTIC ACTIVITY</scope>
    <scope>MUTAGENESIS OF TRP-103; VAL-220 AND SER-351</scope>
    <scope>CHARACTERIZATION OF VARIANTS SPG54 287-ARG--GLN-711 DEL; 516-ARG--GLN-711 DEL AND HIS-660</scope>
</reference>
<reference key="11">
    <citation type="journal article" date="2023" name="J. Lipid Res.">
        <title>Cooperative lipolytic control of neuronal triacylglycerol by spastic paraplegia-associated enzyme DDHD2 and ATGL.</title>
        <authorList>
            <person name="Hofer P."/>
            <person name="Grabner G.F."/>
            <person name="Koenig M."/>
            <person name="Xie H."/>
            <person name="Bulfon D."/>
            <person name="Ludwig A.E."/>
            <person name="Wolinski H."/>
            <person name="Zimmermann R."/>
            <person name="Zechner R."/>
            <person name="Heier C."/>
        </authorList>
    </citation>
    <scope>FUNCTION</scope>
    <scope>CATALYTIC ACTIVITY</scope>
</reference>
<reference key="12">
    <citation type="journal article" date="2012" name="Am. J. Hum. Genet.">
        <title>Mutations in DDHD2, encoding an intracellular phospholipase A(1), cause a recessive form of complex hereditary spastic paraplegia.</title>
        <authorList>
            <person name="Schuurs-Hoeijmakers J.H."/>
            <person name="Geraghty M.T."/>
            <person name="Kamsteeg E.J."/>
            <person name="Ben-Salem S."/>
            <person name="de Bot S.T."/>
            <person name="Nijhof B."/>
            <person name="van de Vondervoort I.I."/>
            <person name="van der Graaf M."/>
            <person name="Nobau A.C."/>
            <person name="Otte-Holler I."/>
            <person name="Vermeer S."/>
            <person name="Smith A.C."/>
            <person name="Humphreys P."/>
            <person name="Schwartzentruber J."/>
            <person name="Ali B.R."/>
            <person name="Al-Yahyaee S.A."/>
            <person name="Tariq S."/>
            <person name="Pramathan T."/>
            <person name="Bayoumi R."/>
            <person name="Kremer H.P."/>
            <person name="van de Warrenburg B.P."/>
            <person name="van den Akker W.M."/>
            <person name="Gilissen C."/>
            <person name="Veltman J.A."/>
            <person name="Janssen I.M."/>
            <person name="Vulto-van Silfhout A.T."/>
            <person name="van der Velde-Visser S."/>
            <person name="Lefeber D.J."/>
            <person name="Diekstra A."/>
            <person name="Erasmus C.E."/>
            <person name="Willemsen M.A."/>
            <person name="Vissers L.E."/>
            <person name="Lammens M."/>
            <person name="van Bokhoven H."/>
            <person name="Brunner H.G."/>
            <person name="Wevers R.A."/>
            <person name="Schenck A."/>
            <person name="Al-Gazali L."/>
            <person name="de Vries B.B."/>
            <person name="de Brouwer A.P."/>
        </authorList>
    </citation>
    <scope>VARIANTS SPG54 287-ARG--GLN-711 DEL; 516-ARG--GLN-711 DEL AND HIS-660</scope>
    <scope>INVOLVEMENT IN SPG54</scope>
</reference>
<reference key="13">
    <citation type="journal article" date="2013" name="Eur. J. Hum. Genet.">
        <title>Mutations in phospholipase DDHD2 cause autosomal recessive hereditary spastic paraplegia (SPG54).</title>
        <authorList>
            <person name="Gonzalez M."/>
            <person name="Nampoothiri S."/>
            <person name="Kornblum C."/>
            <person name="Oteyza A.C."/>
            <person name="Walter J."/>
            <person name="Konidari I."/>
            <person name="Hulme W."/>
            <person name="Speziani F."/>
            <person name="Schoels L."/>
            <person name="Zuechner S."/>
            <person name="Schuele R."/>
        </authorList>
    </citation>
    <scope>VARIANT SPG54 287-ARG--GLN-711 DEL</scope>
    <scope>INVOLVEMENT IN SPG54</scope>
</reference>
<reference key="14">
    <citation type="journal article" date="2014" name="Science">
        <title>Exome sequencing links corticospinal motor neuron disease to common neurodegenerative disorders.</title>
        <authorList>
            <person name="Novarino G."/>
            <person name="Fenstermaker A.G."/>
            <person name="Zaki M.S."/>
            <person name="Hofree M."/>
            <person name="Silhavy J.L."/>
            <person name="Heiberg A.D."/>
            <person name="Abdellateef M."/>
            <person name="Rosti B."/>
            <person name="Scott E."/>
            <person name="Mansour L."/>
            <person name="Masri A."/>
            <person name="Kayserili H."/>
            <person name="Al-Aama J.Y."/>
            <person name="Abdel-Salam G.M."/>
            <person name="Karminejad A."/>
            <person name="Kara M."/>
            <person name="Kara B."/>
            <person name="Bozorgmehri B."/>
            <person name="Ben-Omran T."/>
            <person name="Mojahedi F."/>
            <person name="Mahmoud I.G."/>
            <person name="Bouslam N."/>
            <person name="Bouhouche A."/>
            <person name="Benomar A."/>
            <person name="Hanein S."/>
            <person name="Raymond L."/>
            <person name="Forlani S."/>
            <person name="Mascaro M."/>
            <person name="Selim L."/>
            <person name="Shehata N."/>
            <person name="Al-Allawi N."/>
            <person name="Bindu P.S."/>
            <person name="Azam M."/>
            <person name="Gunel M."/>
            <person name="Caglayan A."/>
            <person name="Bilguvar K."/>
            <person name="Tolun A."/>
            <person name="Issa M.Y."/>
            <person name="Schroth J."/>
            <person name="Spencer E.G."/>
            <person name="Rosti R.O."/>
            <person name="Akizu N."/>
            <person name="Vaux K.K."/>
            <person name="Johansen A."/>
            <person name="Koh A.A."/>
            <person name="Megahed H."/>
            <person name="Durr A."/>
            <person name="Brice A."/>
            <person name="Stevanin G."/>
            <person name="Gabriel S.B."/>
            <person name="Ideker T."/>
            <person name="Gleeson J.G."/>
        </authorList>
    </citation>
    <scope>VARIANT SPG54 287-ARG--GLN-711 DEL</scope>
    <scope>INVOLVEMENT IN SPG54</scope>
</reference>
<keyword id="KW-0025">Alternative splicing</keyword>
<keyword id="KW-0963">Cytoplasm</keyword>
<keyword id="KW-0225">Disease variant</keyword>
<keyword id="KW-0333">Golgi apparatus</keyword>
<keyword id="KW-0890">Hereditary spastic paraplegia</keyword>
<keyword id="KW-0378">Hydrolase</keyword>
<keyword id="KW-0442">Lipid degradation</keyword>
<keyword id="KW-0443">Lipid metabolism</keyword>
<keyword id="KW-0523">Neurodegeneration</keyword>
<keyword id="KW-0597">Phosphoprotein</keyword>
<keyword id="KW-1267">Proteomics identification</keyword>
<keyword id="KW-1185">Reference proteome</keyword>
<evidence type="ECO:0000250" key="1">
    <source>
        <dbReference type="UniProtKB" id="Q80Y98"/>
    </source>
</evidence>
<evidence type="ECO:0000255" key="2">
    <source>
        <dbReference type="PROSITE-ProRule" id="PRU00248"/>
    </source>
</evidence>
<evidence type="ECO:0000255" key="3">
    <source>
        <dbReference type="PROSITE-ProRule" id="PRU00378"/>
    </source>
</evidence>
<evidence type="ECO:0000256" key="4">
    <source>
        <dbReference type="SAM" id="MobiDB-lite"/>
    </source>
</evidence>
<evidence type="ECO:0000269" key="5">
    <source>
    </source>
</evidence>
<evidence type="ECO:0000269" key="6">
    <source>
    </source>
</evidence>
<evidence type="ECO:0000269" key="7">
    <source>
    </source>
</evidence>
<evidence type="ECO:0000269" key="8">
    <source>
    </source>
</evidence>
<evidence type="ECO:0000269" key="9">
    <source>
    </source>
</evidence>
<evidence type="ECO:0000269" key="10">
    <source>
    </source>
</evidence>
<evidence type="ECO:0000269" key="11">
    <source>
    </source>
</evidence>
<evidence type="ECO:0000269" key="12">
    <source>
    </source>
</evidence>
<evidence type="ECO:0000269" key="13">
    <source>
    </source>
</evidence>
<evidence type="ECO:0000303" key="14">
    <source>
    </source>
</evidence>
<evidence type="ECO:0000303" key="15">
    <source>
    </source>
</evidence>
<evidence type="ECO:0000303" key="16">
    <source>
    </source>
</evidence>
<evidence type="ECO:0000305" key="17"/>
<evidence type="ECO:0000305" key="18">
    <source>
    </source>
</evidence>
<evidence type="ECO:0000305" key="19">
    <source>
    </source>
</evidence>
<evidence type="ECO:0000305" key="20">
    <source>
    </source>
</evidence>
<evidence type="ECO:0000312" key="21">
    <source>
        <dbReference type="HGNC" id="HGNC:29106"/>
    </source>
</evidence>
<sequence length="711" mass="81032">MSSVQSQQEQLSQSDPSPSPNSCSSFELIDMDAGSLYEPVSPHWFYCKIIDSKETWIPFNSEDSQQLEEAYSSGKGCNGRVVPTDGGRYDVHLGERMRYAVYWDELASEVRRCTWFYKGDKDNKYVPYSESFSQVLEETYMLAVTLDEWKKKLESPNREIIILHNPKLMVHYQPVAGSDDWGSTPTEQGRPRTVKRGVENISVDIHCGEPLQIDHLVFVVHGIGPACDLRFRSIVQCVNDFRSVSLNLLQTHFKKAQENQQIGRVEFLPVNWHSPLHSTGVDVDLQRITLPSINRLRHFTNDTILDVFFYNSPTYCQTIVDTVASEMNRIYTLFLQRNPDFKGGVSIAGHSLGSLILFDILTNQKDSLGDIDSEKDSLNIVMDQGDTPTLEEDLKKLQLSEFFDIFEKEKVDKEALALCTDRDLQEIGIPLGPRKKILNYFSTRKNSMGIKRPAPQPASGANIPKESEFCSSSNTRNGDYLDVGIGQVSVKYPRLIYKPEIFFAFGSPIGMFLTVRGLKRIDPNYRFPTCKGFFNIYHPFDPVAYRIEPMVVPGVEFEPMLIPHHKGRKRMHLELREGLTRMSMDLKNNLLGSLRMAWKSFTRAPYPALQASETPEETEAEPESTSEKPSDVNTEETSVAVKEEVLPINVGMLNGGQRIDYVLQEKPIESFNEYLFALQSHLCYWESEDTVLLVLKEIYQTQGIFLDQPLQ</sequence>
<protein>
    <recommendedName>
        <fullName evidence="15 16">Triacylglycerol hydrolase DDHD2</fullName>
        <shortName evidence="15 16">TAG hydrolase</shortName>
        <ecNumber evidence="11 12">3.1.1.3</ecNumber>
    </recommendedName>
    <alternativeName>
        <fullName evidence="17">DDHD domain-containing protein 2</fullName>
    </alternativeName>
    <alternativeName>
        <fullName>KIAA0725p</fullName>
    </alternativeName>
    <alternativeName>
        <fullName evidence="17">Phospholipase DDHD2</fullName>
        <ecNumber>3.1.1.-</ecNumber>
    </alternativeName>
    <alternativeName>
        <fullName>SAM, WWE and DDHD domain-containing protein 1</fullName>
    </alternativeName>
    <alternativeName>
        <fullName evidence="15">Triglyceride hydrolase DDHD2</fullName>
    </alternativeName>
    <alternativeName>
        <fullName evidence="1">Triglyceride lipase</fullName>
    </alternativeName>
</protein>
<gene>
    <name evidence="21" type="primary">DDHD2</name>
    <name type="synonym">KIAA0725</name>
    <name type="synonym">SAMWD1</name>
</gene>